<accession>Q60489</accession>
<gene>
    <name type="primary">ATP1B3</name>
</gene>
<dbReference type="EMBL" id="D84448">
    <property type="protein sequence ID" value="BAA12665.1"/>
    <property type="molecule type" value="mRNA"/>
</dbReference>
<dbReference type="RefSeq" id="NP_001166389.1">
    <property type="nucleotide sequence ID" value="NM_001172918.2"/>
</dbReference>
<dbReference type="SMR" id="Q60489"/>
<dbReference type="FunCoup" id="Q60489">
    <property type="interactions" value="1496"/>
</dbReference>
<dbReference type="STRING" id="10141.ENSCPOP00000003376"/>
<dbReference type="GlyCosmos" id="Q60489">
    <property type="glycosylation" value="1 site, No reported glycans"/>
</dbReference>
<dbReference type="Ensembl" id="ENSCPOT00000003783.3">
    <property type="protein sequence ID" value="ENSCPOP00000003376.2"/>
    <property type="gene ID" value="ENSCPOG00000003739.4"/>
</dbReference>
<dbReference type="GeneID" id="100135484"/>
<dbReference type="KEGG" id="cpoc:100135484"/>
<dbReference type="CTD" id="483"/>
<dbReference type="VEuPathDB" id="HostDB:ENSCPOG00000003739"/>
<dbReference type="eggNOG" id="KOG3927">
    <property type="taxonomic scope" value="Eukaryota"/>
</dbReference>
<dbReference type="GeneTree" id="ENSGT01030000234579"/>
<dbReference type="HOGENOM" id="CLU_057702_1_1_1"/>
<dbReference type="InParanoid" id="Q60489"/>
<dbReference type="OMA" id="NRNSGEF"/>
<dbReference type="OrthoDB" id="5912413at2759"/>
<dbReference type="TreeFam" id="TF314618"/>
<dbReference type="Proteomes" id="UP000005447">
    <property type="component" value="Unassembled WGS sequence"/>
</dbReference>
<dbReference type="Bgee" id="ENSCPOG00000003739">
    <property type="expression patterns" value="Expressed in zone of skin and 13 other cell types or tissues"/>
</dbReference>
<dbReference type="GO" id="GO:0016324">
    <property type="term" value="C:apical plasma membrane"/>
    <property type="evidence" value="ECO:0000250"/>
    <property type="project" value="UniProtKB"/>
</dbReference>
<dbReference type="GO" id="GO:0016323">
    <property type="term" value="C:basolateral plasma membrane"/>
    <property type="evidence" value="ECO:0000250"/>
    <property type="project" value="UniProtKB"/>
</dbReference>
<dbReference type="GO" id="GO:0042470">
    <property type="term" value="C:melanosome"/>
    <property type="evidence" value="ECO:0007669"/>
    <property type="project" value="UniProtKB-SubCell"/>
</dbReference>
<dbReference type="GO" id="GO:0005890">
    <property type="term" value="C:sodium:potassium-exchanging ATPase complex"/>
    <property type="evidence" value="ECO:0007669"/>
    <property type="project" value="InterPro"/>
</dbReference>
<dbReference type="GO" id="GO:0001671">
    <property type="term" value="F:ATPase activator activity"/>
    <property type="evidence" value="ECO:0007669"/>
    <property type="project" value="TreeGrafter"/>
</dbReference>
<dbReference type="GO" id="GO:0030007">
    <property type="term" value="P:intracellular potassium ion homeostasis"/>
    <property type="evidence" value="ECO:0007669"/>
    <property type="project" value="TreeGrafter"/>
</dbReference>
<dbReference type="GO" id="GO:0006883">
    <property type="term" value="P:intracellular sodium ion homeostasis"/>
    <property type="evidence" value="ECO:0007669"/>
    <property type="project" value="TreeGrafter"/>
</dbReference>
<dbReference type="GO" id="GO:1990573">
    <property type="term" value="P:potassium ion import across plasma membrane"/>
    <property type="evidence" value="ECO:0007669"/>
    <property type="project" value="TreeGrafter"/>
</dbReference>
<dbReference type="GO" id="GO:0036376">
    <property type="term" value="P:sodium ion export across plasma membrane"/>
    <property type="evidence" value="ECO:0007669"/>
    <property type="project" value="TreeGrafter"/>
</dbReference>
<dbReference type="FunFam" id="1.20.5.170:FF:000068">
    <property type="entry name" value="Sodium/potassium-transporting ATPase subunit beta"/>
    <property type="match status" value="1"/>
</dbReference>
<dbReference type="FunFam" id="2.60.40.1660:FF:000005">
    <property type="entry name" value="Sodium/potassium-transporting ATPase subunit beta"/>
    <property type="match status" value="1"/>
</dbReference>
<dbReference type="Gene3D" id="2.60.40.1660">
    <property type="entry name" value="Na, k-atpase alpha subunit"/>
    <property type="match status" value="1"/>
</dbReference>
<dbReference type="InterPro" id="IPR000402">
    <property type="entry name" value="Na/K_ATPase_sub_beta"/>
</dbReference>
<dbReference type="InterPro" id="IPR038702">
    <property type="entry name" value="Na/K_ATPase_sub_beta_sf"/>
</dbReference>
<dbReference type="NCBIfam" id="TIGR01107">
    <property type="entry name" value="Na_K_ATPase_bet"/>
    <property type="match status" value="1"/>
</dbReference>
<dbReference type="PANTHER" id="PTHR11523">
    <property type="entry name" value="SODIUM/POTASSIUM-DEPENDENT ATPASE BETA SUBUNIT"/>
    <property type="match status" value="1"/>
</dbReference>
<dbReference type="PANTHER" id="PTHR11523:SF47">
    <property type="entry name" value="SODIUM_POTASSIUM-TRANSPORTING ATPASE SUBUNIT BETA-3"/>
    <property type="match status" value="1"/>
</dbReference>
<dbReference type="Pfam" id="PF00287">
    <property type="entry name" value="Na_K-ATPase"/>
    <property type="match status" value="1"/>
</dbReference>
<dbReference type="PROSITE" id="PS00390">
    <property type="entry name" value="ATPASE_NA_K_BETA_1"/>
    <property type="match status" value="1"/>
</dbReference>
<reference key="1">
    <citation type="submission" date="1996-05" db="EMBL/GenBank/DDBJ databases">
        <title>Isolation of cDNA encoding the guinea pig Na+,K+-ATPase beta-3 subunit.</title>
        <authorList>
            <person name="Watanabe T."/>
            <person name="Sato M."/>
            <person name="Yoshida T."/>
            <person name="Suzuki Y."/>
        </authorList>
    </citation>
    <scope>NUCLEOTIDE SEQUENCE [MRNA]</scope>
    <source>
        <strain>Hartley</strain>
        <tissue>Distal colon</tissue>
    </source>
</reference>
<name>AT1B3_CAVPO</name>
<sequence>MTKSEKKSLNESLAQWKLFLYNPTTREFLGRTAKSWGLILLFYLVFYGFLAALFTFTMWAMLQTLNDEIPKYRDQIPSPGLMVFPKPVTALEYTFSVSDPSSYEGYIKDLKKFLKSYSLDEQKNLNKCTDGVLFEQTGPVYAACQFPDSLLEACSGTDDPDFGYSQGQPCVLVKMNRIIGLKPEGSPRIDCISKDENTAMVSTYPNQGVIDLKYFPYYGKKLHVGYLQPLVAVQVSFGSNSTKKEVTVECKIEGSKNLRNEDDRDKFLGRVAFKITARA</sequence>
<keyword id="KW-1003">Cell membrane</keyword>
<keyword id="KW-1015">Disulfide bond</keyword>
<keyword id="KW-0325">Glycoprotein</keyword>
<keyword id="KW-0406">Ion transport</keyword>
<keyword id="KW-0472">Membrane</keyword>
<keyword id="KW-0630">Potassium</keyword>
<keyword id="KW-0633">Potassium transport</keyword>
<keyword id="KW-1185">Reference proteome</keyword>
<keyword id="KW-0735">Signal-anchor</keyword>
<keyword id="KW-0915">Sodium</keyword>
<keyword id="KW-0739">Sodium transport</keyword>
<keyword id="KW-0740">Sodium/potassium transport</keyword>
<keyword id="KW-0812">Transmembrane</keyword>
<keyword id="KW-1133">Transmembrane helix</keyword>
<keyword id="KW-0813">Transport</keyword>
<protein>
    <recommendedName>
        <fullName>Sodium/potassium-transporting ATPase subunit beta-3</fullName>
    </recommendedName>
    <alternativeName>
        <fullName>Sodium/potassium-dependent ATPase subunit beta-3</fullName>
        <shortName>ATPB-3</shortName>
    </alternativeName>
    <cdAntigenName>CD298</cdAntigenName>
</protein>
<feature type="chain" id="PRO_0000219107" description="Sodium/potassium-transporting ATPase subunit beta-3">
    <location>
        <begin position="1"/>
        <end position="279"/>
    </location>
</feature>
<feature type="topological domain" description="Cytoplasmic" evidence="4">
    <location>
        <begin position="1"/>
        <end position="35"/>
    </location>
</feature>
<feature type="transmembrane region" description="Helical; Signal-anchor for type II membrane protein" evidence="4">
    <location>
        <begin position="36"/>
        <end position="56"/>
    </location>
</feature>
<feature type="topological domain" description="Extracellular" evidence="4">
    <location>
        <begin position="57"/>
        <end position="279"/>
    </location>
</feature>
<feature type="region of interest" description="immunoglobulin-like" evidence="1">
    <location>
        <begin position="186"/>
        <end position="279"/>
    </location>
</feature>
<feature type="glycosylation site" description="N-linked (GlcNAc...) asparagine" evidence="4">
    <location>
        <position position="240"/>
    </location>
</feature>
<feature type="disulfide bond" evidence="1">
    <location>
        <begin position="128"/>
        <end position="144"/>
    </location>
</feature>
<feature type="disulfide bond" evidence="1">
    <location>
        <begin position="154"/>
        <end position="170"/>
    </location>
</feature>
<feature type="disulfide bond" evidence="1">
    <location>
        <begin position="191"/>
        <end position="250"/>
    </location>
</feature>
<comment type="function">
    <text evidence="1">This is the non-catalytic component of the active enzyme, which catalyzes the hydrolysis of ATP coupled with the exchange of Na(+) and K(+) ions across the plasma membrane. The exact function of the beta-3 subunit is not known (By similarity).</text>
</comment>
<comment type="subunit">
    <text evidence="3">The sodium/potassium-transporting ATPase is composed of a catalytic alpha subunit, an auxiliary non-catalytic beta subunit and an additional regulatory subunit. Interacts with catalytic alpha subunit ATP12A.</text>
</comment>
<comment type="subcellular location">
    <subcellularLocation>
        <location evidence="3">Apical cell membrane</location>
        <topology evidence="4">Single-pass type II membrane protein</topology>
    </subcellularLocation>
    <subcellularLocation>
        <location evidence="3">Basolateral cell membrane</location>
        <topology evidence="4">Single-pass type II membrane protein</topology>
    </subcellularLocation>
    <subcellularLocation>
        <location evidence="2">Melanosome</location>
    </subcellularLocation>
    <text evidence="2">Identified by mass spectrometry in melanosome fractions from stage I to stage IV.</text>
</comment>
<comment type="domain">
    <text evidence="1">The C-terminal lobe folds into an immunoglobulin-like domain and may mediate cell adhesion properties.</text>
</comment>
<comment type="similarity">
    <text evidence="5">Belongs to the X(+)/potassium ATPases subunit beta family.</text>
</comment>
<organism>
    <name type="scientific">Cavia porcellus</name>
    <name type="common">Guinea pig</name>
    <dbReference type="NCBI Taxonomy" id="10141"/>
    <lineage>
        <taxon>Eukaryota</taxon>
        <taxon>Metazoa</taxon>
        <taxon>Chordata</taxon>
        <taxon>Craniata</taxon>
        <taxon>Vertebrata</taxon>
        <taxon>Euteleostomi</taxon>
        <taxon>Mammalia</taxon>
        <taxon>Eutheria</taxon>
        <taxon>Euarchontoglires</taxon>
        <taxon>Glires</taxon>
        <taxon>Rodentia</taxon>
        <taxon>Hystricomorpha</taxon>
        <taxon>Caviidae</taxon>
        <taxon>Cavia</taxon>
    </lineage>
</organism>
<evidence type="ECO:0000250" key="1"/>
<evidence type="ECO:0000250" key="2">
    <source>
        <dbReference type="UniProtKB" id="P54709"/>
    </source>
</evidence>
<evidence type="ECO:0000250" key="3">
    <source>
        <dbReference type="UniProtKB" id="Q63377"/>
    </source>
</evidence>
<evidence type="ECO:0000255" key="4"/>
<evidence type="ECO:0000305" key="5"/>
<proteinExistence type="evidence at transcript level"/>